<protein>
    <recommendedName>
        <fullName>Ephrin-B2</fullName>
    </recommendedName>
    <alternativeName>
        <fullName>ELF-2</fullName>
    </alternativeName>
    <alternativeName>
        <fullName>EPH-related receptor tyrosine kinase ligand 5</fullName>
        <shortName>LERK-5</shortName>
    </alternativeName>
    <alternativeName>
        <fullName>HTK ligand</fullName>
        <shortName>HTK-L</shortName>
    </alternativeName>
</protein>
<gene>
    <name type="primary">Efnb2</name>
    <name type="synonym">Elf2</name>
    <name type="synonym">Epl5</name>
    <name type="synonym">Eplg5</name>
    <name type="synonym">Htkl</name>
    <name type="synonym">Lerk5</name>
</gene>
<comment type="function">
    <text evidence="6">Cell surface transmembrane ligand for Eph receptors, a family of receptor tyrosine kinases which are crucial for migration, repulsion and adhesion during neuronal, vascular and epithelial development. Binds promiscuously Eph receptors residing on adjacent cells, leading to contact-dependent bidirectional signaling into neighboring cells. The signaling pathway downstream of the receptor is referred to as forward signaling while the signaling pathway downstream of the ephrin ligand is referred to as reverse signaling. Binds to receptor tyrosine kinase including EPHA4, EPHA3 and EPHB4. Together with EPHB4 plays a central role in heart morphogenesis and angiogenesis through regulation of cell adhesion and cell migration. EPHB4-mediated forward signaling controls cellular repulsion and segregation from EFNB2-expressing cells. May play a role in constraining the orientation of longitudinally projecting axons.</text>
</comment>
<comment type="subunit">
    <text evidence="1">Interacts with PDZRN3. Binds to the ephrin receptor EPHA3, EPHA4 and EPHB4 (By similarity).</text>
</comment>
<comment type="interaction">
    <interactant intactId="EBI-1032676">
        <id>P52800</id>
    </interactant>
    <interactant intactId="EBI-1539152">
        <id>Q03137</id>
        <label>Epha4</label>
    </interactant>
    <organismsDiffer>false</organismsDiffer>
    <experiments>2</experiments>
</comment>
<comment type="interaction">
    <interactant intactId="EBI-1032676">
        <id>P52800</id>
    </interactant>
    <interactant intactId="EBI-6109302">
        <id>O88797</id>
        <label>Dab2</label>
    </interactant>
    <organismsDiffer>true</organismsDiffer>
    <experiments>2</experiments>
</comment>
<comment type="interaction">
    <interactant intactId="EBI-1032676">
        <id>P52800</id>
    </interactant>
    <interactant intactId="EBI-621482">
        <id>P12931</id>
        <label>SRC</label>
    </interactant>
    <organismsDiffer>true</organismsDiffer>
    <experiments>2</experiments>
</comment>
<comment type="subcellular location">
    <subcellularLocation>
        <location evidence="2">Cell membrane</location>
        <topology evidence="3">Single-pass type I membrane protein</topology>
    </subcellularLocation>
    <subcellularLocation>
        <location evidence="10">Cell junction</location>
        <location evidence="10">Adherens junction</location>
    </subcellularLocation>
</comment>
<comment type="tissue specificity">
    <text evidence="6 9 10 11">Expressed in inner and outer pillar cells of the organ of Corti (at protein level) (PubMed:30639848). Expressed on lateral floor plate cells, specifically on commissural axon segments that have passed through the floor plate. Expressed in cells of the retinal ganglion cell layer during retinal axon guidance to the optic disk (PubMed:10704386, PubMed:7651410). Expressed in myogenic progenitor cells (PubMed:27446912).</text>
</comment>
<comment type="developmental stage">
    <text evidence="6 9 11">Expressed in the floor plate throughout the period of commissural axon pathfinding (PubMed:10704386, PubMed:7651410). In myogenic progenitor cells, highly expressed during early development (11.5 dpc) and progressively repressed as developments proceeds (PubMed:27446912).</text>
</comment>
<comment type="PTM">
    <text evidence="1">Inducible phosphorylation of tyrosine residues in the cytoplasmic domain.</text>
</comment>
<comment type="similarity">
    <text evidence="4">Belongs to the ephrin family.</text>
</comment>
<comment type="sequence caution" evidence="12">
    <conflict type="erroneous initiation">
        <sequence resource="EMBL-CDS" id="AAC42052"/>
    </conflict>
    <text>Truncated N-terminus.</text>
</comment>
<sequence>MAMARSRRDSVWKYCWGLLMVLCRTAISRSIVLEPIYWNSSNSKFLPGQGLVLYPQIGDKLDIICPKVDSKTVGQYEYYKVYMVDKDQADRCTIKKENTPLLNCARPDQDVKFTIKFQEFSPNLWGLEFQKNKDYYIISTSNGSLEGLDNQEGGVCQTRAMKILMKVGQDASSAGSARNHGPTRRPELEAGTNGRSSTTSPFVKPNPGSSTDGNSAGHSGNNLLGSEVALFAGIASGCIIFIVIIITLVVLLLKYRRRHRKHSPQHTTTLSLSTLATPKRGGNNNGSEPSDVIIPLRTADSVFCPHYEKVSGDYGHPVYIVQEMPPQSPANIYYKV</sequence>
<feature type="signal peptide" evidence="3">
    <location>
        <begin position="1"/>
        <end position="28"/>
    </location>
</feature>
<feature type="chain" id="PRO_0000008393" description="Ephrin-B2">
    <location>
        <begin position="29"/>
        <end position="336"/>
    </location>
</feature>
<feature type="topological domain" description="Extracellular" evidence="3">
    <location>
        <begin position="29"/>
        <end position="232"/>
    </location>
</feature>
<feature type="transmembrane region" description="Helical" evidence="3">
    <location>
        <begin position="233"/>
        <end position="253"/>
    </location>
</feature>
<feature type="topological domain" description="Cytoplasmic" evidence="3">
    <location>
        <begin position="254"/>
        <end position="336"/>
    </location>
</feature>
<feature type="domain" description="Ephrin RBD" evidence="4">
    <location>
        <begin position="31"/>
        <end position="167"/>
    </location>
</feature>
<feature type="region of interest" description="Disordered" evidence="5">
    <location>
        <begin position="170"/>
        <end position="216"/>
    </location>
</feature>
<feature type="short sequence motif" description="PDZ-binding" evidence="3">
    <location>
        <begin position="334"/>
        <end position="336"/>
    </location>
</feature>
<feature type="compositionally biased region" description="Polar residues" evidence="5">
    <location>
        <begin position="193"/>
        <end position="216"/>
    </location>
</feature>
<feature type="modified residue" description="Phosphoserine" evidence="14">
    <location>
        <position position="263"/>
    </location>
</feature>
<feature type="modified residue" description="Phosphothreonine" evidence="14">
    <location>
        <position position="277"/>
    </location>
</feature>
<feature type="modified residue" description="Omega-N-methylarginine" evidence="15">
    <location>
        <position position="280"/>
    </location>
</feature>
<feature type="glycosylation site" description="N-linked (GlcNAc...) asparagine" evidence="7">
    <location>
        <position position="39"/>
    </location>
</feature>
<feature type="glycosylation site" description="N-linked (GlcNAc...) asparagine" evidence="3">
    <location>
        <position position="142"/>
    </location>
</feature>
<feature type="disulfide bond" evidence="7 8 13">
    <location>
        <begin position="65"/>
        <end position="104"/>
    </location>
</feature>
<feature type="disulfide bond" evidence="7 8 13">
    <location>
        <begin position="92"/>
        <end position="156"/>
    </location>
</feature>
<feature type="sequence conflict" description="In Ref. 1; AAA99708." evidence="12" ref="1">
    <original>A</original>
    <variation>T</variation>
    <location>
        <position position="177"/>
    </location>
</feature>
<feature type="turn" evidence="16">
    <location>
        <begin position="47"/>
        <end position="49"/>
    </location>
</feature>
<feature type="strand" evidence="16">
    <location>
        <begin position="50"/>
        <end position="53"/>
    </location>
</feature>
<feature type="strand" evidence="16">
    <location>
        <begin position="60"/>
        <end position="64"/>
    </location>
</feature>
<feature type="strand" evidence="16">
    <location>
        <begin position="70"/>
        <end position="72"/>
    </location>
</feature>
<feature type="strand" evidence="16">
    <location>
        <begin position="78"/>
        <end position="84"/>
    </location>
</feature>
<feature type="helix" evidence="16">
    <location>
        <begin position="86"/>
        <end position="91"/>
    </location>
</feature>
<feature type="strand" evidence="16">
    <location>
        <begin position="101"/>
        <end position="104"/>
    </location>
</feature>
<feature type="strand" evidence="16">
    <location>
        <begin position="112"/>
        <end position="116"/>
    </location>
</feature>
<feature type="strand" evidence="16">
    <location>
        <begin position="133"/>
        <end position="138"/>
    </location>
</feature>
<feature type="helix" evidence="16">
    <location>
        <begin position="145"/>
        <end position="147"/>
    </location>
</feature>
<feature type="helix" evidence="16">
    <location>
        <begin position="154"/>
        <end position="158"/>
    </location>
</feature>
<feature type="strand" evidence="16">
    <location>
        <begin position="162"/>
        <end position="167"/>
    </location>
</feature>
<keyword id="KW-0002">3D-structure</keyword>
<keyword id="KW-0037">Angiogenesis</keyword>
<keyword id="KW-0965">Cell junction</keyword>
<keyword id="KW-1003">Cell membrane</keyword>
<keyword id="KW-0217">Developmental protein</keyword>
<keyword id="KW-0221">Differentiation</keyword>
<keyword id="KW-1015">Disulfide bond</keyword>
<keyword id="KW-0325">Glycoprotein</keyword>
<keyword id="KW-0472">Membrane</keyword>
<keyword id="KW-0488">Methylation</keyword>
<keyword id="KW-0524">Neurogenesis</keyword>
<keyword id="KW-0597">Phosphoprotein</keyword>
<keyword id="KW-1185">Reference proteome</keyword>
<keyword id="KW-0732">Signal</keyword>
<keyword id="KW-0812">Transmembrane</keyword>
<keyword id="KW-1133">Transmembrane helix</keyword>
<organism>
    <name type="scientific">Mus musculus</name>
    <name type="common">Mouse</name>
    <dbReference type="NCBI Taxonomy" id="10090"/>
    <lineage>
        <taxon>Eukaryota</taxon>
        <taxon>Metazoa</taxon>
        <taxon>Chordata</taxon>
        <taxon>Craniata</taxon>
        <taxon>Vertebrata</taxon>
        <taxon>Euteleostomi</taxon>
        <taxon>Mammalia</taxon>
        <taxon>Eutheria</taxon>
        <taxon>Euarchontoglires</taxon>
        <taxon>Glires</taxon>
        <taxon>Rodentia</taxon>
        <taxon>Myomorpha</taxon>
        <taxon>Muroidea</taxon>
        <taxon>Muridae</taxon>
        <taxon>Murinae</taxon>
        <taxon>Mus</taxon>
        <taxon>Mus</taxon>
    </lineage>
</organism>
<dbReference type="EMBL" id="U16819">
    <property type="protein sequence ID" value="AAA99708.1"/>
    <property type="molecule type" value="mRNA"/>
</dbReference>
<dbReference type="EMBL" id="L38847">
    <property type="protein sequence ID" value="AAC42052.1"/>
    <property type="status" value="ALT_INIT"/>
    <property type="molecule type" value="mRNA"/>
</dbReference>
<dbReference type="EMBL" id="U30244">
    <property type="protein sequence ID" value="AAA82934.1"/>
    <property type="molecule type" value="mRNA"/>
</dbReference>
<dbReference type="EMBL" id="BC057009">
    <property type="protein sequence ID" value="AAH57009.1"/>
    <property type="molecule type" value="mRNA"/>
</dbReference>
<dbReference type="CCDS" id="CCDS22090.1"/>
<dbReference type="PIR" id="I49766">
    <property type="entry name" value="I49766"/>
</dbReference>
<dbReference type="RefSeq" id="NP_034241.2">
    <property type="nucleotide sequence ID" value="NM_010111.5"/>
</dbReference>
<dbReference type="PDB" id="1IKO">
    <property type="method" value="X-ray"/>
    <property type="resolution" value="1.92 A"/>
    <property type="chains" value="P=30-207"/>
</dbReference>
<dbReference type="PDB" id="1KGY">
    <property type="method" value="X-ray"/>
    <property type="resolution" value="2.70 A"/>
    <property type="chains" value="E/F/G/H=31-168"/>
</dbReference>
<dbReference type="PDBsum" id="1IKO"/>
<dbReference type="PDBsum" id="1KGY"/>
<dbReference type="BMRB" id="P52800"/>
<dbReference type="SMR" id="P52800"/>
<dbReference type="BioGRID" id="199395">
    <property type="interactions" value="8"/>
</dbReference>
<dbReference type="CORUM" id="P52800"/>
<dbReference type="DIP" id="DIP-29208N"/>
<dbReference type="FunCoup" id="P52800">
    <property type="interactions" value="298"/>
</dbReference>
<dbReference type="IntAct" id="P52800">
    <property type="interactions" value="17"/>
</dbReference>
<dbReference type="MINT" id="P52800"/>
<dbReference type="STRING" id="10090.ENSMUSP00000001319"/>
<dbReference type="GlyConnect" id="2294">
    <property type="glycosylation" value="1 N-Linked glycan (1 site)"/>
</dbReference>
<dbReference type="GlyCosmos" id="P52800">
    <property type="glycosylation" value="2 sites, 1 glycan"/>
</dbReference>
<dbReference type="GlyGen" id="P52800">
    <property type="glycosylation" value="2 sites, 3 N-linked glycans (2 sites)"/>
</dbReference>
<dbReference type="iPTMnet" id="P52800"/>
<dbReference type="PhosphoSitePlus" id="P52800"/>
<dbReference type="PaxDb" id="10090-ENSMUSP00000001319"/>
<dbReference type="PeptideAtlas" id="P52800"/>
<dbReference type="ProteomicsDB" id="277770"/>
<dbReference type="ABCD" id="P52800">
    <property type="antibodies" value="34 sequenced antibodies"/>
</dbReference>
<dbReference type="Antibodypedia" id="2406">
    <property type="antibodies" value="530 antibodies from 44 providers"/>
</dbReference>
<dbReference type="DNASU" id="13642"/>
<dbReference type="Ensembl" id="ENSMUST00000001319.15">
    <property type="protein sequence ID" value="ENSMUSP00000001319.8"/>
    <property type="gene ID" value="ENSMUSG00000001300.17"/>
</dbReference>
<dbReference type="GeneID" id="13642"/>
<dbReference type="KEGG" id="mmu:13642"/>
<dbReference type="UCSC" id="uc009kue.1">
    <property type="organism name" value="mouse"/>
</dbReference>
<dbReference type="AGR" id="MGI:105097"/>
<dbReference type="CTD" id="1948"/>
<dbReference type="MGI" id="MGI:105097">
    <property type="gene designation" value="Efnb2"/>
</dbReference>
<dbReference type="VEuPathDB" id="HostDB:ENSMUSG00000001300"/>
<dbReference type="eggNOG" id="KOG3858">
    <property type="taxonomic scope" value="Eukaryota"/>
</dbReference>
<dbReference type="GeneTree" id="ENSGT00940000155868"/>
<dbReference type="HOGENOM" id="CLU_072080_0_0_1"/>
<dbReference type="InParanoid" id="P52800"/>
<dbReference type="OMA" id="VPYPPKH"/>
<dbReference type="OrthoDB" id="6250301at2759"/>
<dbReference type="PhylomeDB" id="P52800"/>
<dbReference type="Reactome" id="R-MMU-2682334">
    <property type="pathway name" value="EPH-Ephrin signaling"/>
</dbReference>
<dbReference type="Reactome" id="R-MMU-3928662">
    <property type="pathway name" value="EPHB-mediated forward signaling"/>
</dbReference>
<dbReference type="Reactome" id="R-MMU-3928664">
    <property type="pathway name" value="Ephrin signaling"/>
</dbReference>
<dbReference type="Reactome" id="R-MMU-3928665">
    <property type="pathway name" value="EPH-ephrin mediated repulsion of cells"/>
</dbReference>
<dbReference type="BioGRID-ORCS" id="13642">
    <property type="hits" value="4 hits in 78 CRISPR screens"/>
</dbReference>
<dbReference type="ChiTaRS" id="Elf2">
    <property type="organism name" value="mouse"/>
</dbReference>
<dbReference type="EvolutionaryTrace" id="P52800"/>
<dbReference type="PRO" id="PR:P52800"/>
<dbReference type="Proteomes" id="UP000000589">
    <property type="component" value="Chromosome 8"/>
</dbReference>
<dbReference type="RNAct" id="P52800">
    <property type="molecule type" value="protein"/>
</dbReference>
<dbReference type="Bgee" id="ENSMUSG00000001300">
    <property type="expression patterns" value="Expressed in lumbar dorsal root ganglion and 295 other cell types or tissues"/>
</dbReference>
<dbReference type="ExpressionAtlas" id="P52800">
    <property type="expression patterns" value="baseline and differential"/>
</dbReference>
<dbReference type="GO" id="GO:0005912">
    <property type="term" value="C:adherens junction"/>
    <property type="evidence" value="ECO:0007669"/>
    <property type="project" value="UniProtKB-SubCell"/>
</dbReference>
<dbReference type="GO" id="GO:0030425">
    <property type="term" value="C:dendrite"/>
    <property type="evidence" value="ECO:0007669"/>
    <property type="project" value="Ensembl"/>
</dbReference>
<dbReference type="GO" id="GO:0098978">
    <property type="term" value="C:glutamatergic synapse"/>
    <property type="evidence" value="ECO:0000314"/>
    <property type="project" value="SynGO"/>
</dbReference>
<dbReference type="GO" id="GO:0005886">
    <property type="term" value="C:plasma membrane"/>
    <property type="evidence" value="ECO:0000314"/>
    <property type="project" value="MGI"/>
</dbReference>
<dbReference type="GO" id="GO:0098839">
    <property type="term" value="C:postsynaptic density membrane"/>
    <property type="evidence" value="ECO:0000314"/>
    <property type="project" value="SynGO"/>
</dbReference>
<dbReference type="GO" id="GO:0042734">
    <property type="term" value="C:presynaptic membrane"/>
    <property type="evidence" value="ECO:0007669"/>
    <property type="project" value="Ensembl"/>
</dbReference>
<dbReference type="GO" id="GO:0098685">
    <property type="term" value="C:Schaffer collateral - CA1 synapse"/>
    <property type="evidence" value="ECO:0000314"/>
    <property type="project" value="SynGO"/>
</dbReference>
<dbReference type="GO" id="GO:0046875">
    <property type="term" value="F:ephrin receptor binding"/>
    <property type="evidence" value="ECO:0007669"/>
    <property type="project" value="Ensembl"/>
</dbReference>
<dbReference type="GO" id="GO:0005102">
    <property type="term" value="F:signaling receptor binding"/>
    <property type="evidence" value="ECO:0000353"/>
    <property type="project" value="MGI"/>
</dbReference>
<dbReference type="GO" id="GO:0034332">
    <property type="term" value="P:adherens junction organization"/>
    <property type="evidence" value="ECO:0000314"/>
    <property type="project" value="ARUK-UCL"/>
</dbReference>
<dbReference type="GO" id="GO:0009887">
    <property type="term" value="P:animal organ morphogenesis"/>
    <property type="evidence" value="ECO:0000315"/>
    <property type="project" value="MGI"/>
</dbReference>
<dbReference type="GO" id="GO:0048514">
    <property type="term" value="P:blood vessel morphogenesis"/>
    <property type="evidence" value="ECO:0000315"/>
    <property type="project" value="MGI"/>
</dbReference>
<dbReference type="GO" id="GO:0007155">
    <property type="term" value="P:cell adhesion"/>
    <property type="evidence" value="ECO:0000250"/>
    <property type="project" value="UniProtKB"/>
</dbReference>
<dbReference type="GO" id="GO:0030154">
    <property type="term" value="P:cell differentiation"/>
    <property type="evidence" value="ECO:0007669"/>
    <property type="project" value="UniProtKB-KW"/>
</dbReference>
<dbReference type="GO" id="GO:0002042">
    <property type="term" value="P:cell migration involved in sprouting angiogenesis"/>
    <property type="evidence" value="ECO:0000250"/>
    <property type="project" value="UniProtKB"/>
</dbReference>
<dbReference type="GO" id="GO:0071222">
    <property type="term" value="P:cellular response to lipopolysaccharide"/>
    <property type="evidence" value="ECO:0007669"/>
    <property type="project" value="Ensembl"/>
</dbReference>
<dbReference type="GO" id="GO:0048013">
    <property type="term" value="P:ephrin receptor signaling pathway"/>
    <property type="evidence" value="ECO:0000250"/>
    <property type="project" value="UniProtKB"/>
</dbReference>
<dbReference type="GO" id="GO:0043616">
    <property type="term" value="P:keratinocyte proliferation"/>
    <property type="evidence" value="ECO:0000315"/>
    <property type="project" value="MGI"/>
</dbReference>
<dbReference type="GO" id="GO:0001945">
    <property type="term" value="P:lymph vessel development"/>
    <property type="evidence" value="ECO:0000315"/>
    <property type="project" value="MGI"/>
</dbReference>
<dbReference type="GO" id="GO:0010839">
    <property type="term" value="P:negative regulation of keratinocyte proliferation"/>
    <property type="evidence" value="ECO:0000315"/>
    <property type="project" value="MGI"/>
</dbReference>
<dbReference type="GO" id="GO:0010977">
    <property type="term" value="P:negative regulation of neuron projection development"/>
    <property type="evidence" value="ECO:0007669"/>
    <property type="project" value="Ensembl"/>
</dbReference>
<dbReference type="GO" id="GO:0072178">
    <property type="term" value="P:nephric duct morphogenesis"/>
    <property type="evidence" value="ECO:0000315"/>
    <property type="project" value="MGI"/>
</dbReference>
<dbReference type="GO" id="GO:1903849">
    <property type="term" value="P:positive regulation of aorta morphogenesis"/>
    <property type="evidence" value="ECO:0000315"/>
    <property type="project" value="MGI"/>
</dbReference>
<dbReference type="GO" id="GO:2000727">
    <property type="term" value="P:positive regulation of cardiac muscle cell differentiation"/>
    <property type="evidence" value="ECO:0000315"/>
    <property type="project" value="BHF-UCL"/>
</dbReference>
<dbReference type="GO" id="GO:0008284">
    <property type="term" value="P:positive regulation of cell population proliferation"/>
    <property type="evidence" value="ECO:0007669"/>
    <property type="project" value="Ensembl"/>
</dbReference>
<dbReference type="GO" id="GO:0099054">
    <property type="term" value="P:presynapse assembly"/>
    <property type="evidence" value="ECO:0007669"/>
    <property type="project" value="Ensembl"/>
</dbReference>
<dbReference type="GO" id="GO:0050920">
    <property type="term" value="P:regulation of chemotaxis"/>
    <property type="evidence" value="ECO:0000250"/>
    <property type="project" value="UniProtKB"/>
</dbReference>
<dbReference type="GO" id="GO:0099072">
    <property type="term" value="P:regulation of postsynaptic membrane neurotransmitter receptor levels"/>
    <property type="evidence" value="ECO:0000314"/>
    <property type="project" value="SynGO"/>
</dbReference>
<dbReference type="GO" id="GO:0099149">
    <property type="term" value="P:regulation of postsynaptic neurotransmitter receptor internalization"/>
    <property type="evidence" value="ECO:0000314"/>
    <property type="project" value="SynGO"/>
</dbReference>
<dbReference type="GO" id="GO:0031295">
    <property type="term" value="P:T cell costimulation"/>
    <property type="evidence" value="ECO:0000314"/>
    <property type="project" value="MGI"/>
</dbReference>
<dbReference type="GO" id="GO:0048845">
    <property type="term" value="P:venous blood vessel morphogenesis"/>
    <property type="evidence" value="ECO:0000315"/>
    <property type="project" value="MGI"/>
</dbReference>
<dbReference type="CDD" id="cd10426">
    <property type="entry name" value="Ephrin-B_Ectodomain"/>
    <property type="match status" value="1"/>
</dbReference>
<dbReference type="FunFam" id="2.60.40.420:FF:000020">
    <property type="entry name" value="Ephrin-B2"/>
    <property type="match status" value="1"/>
</dbReference>
<dbReference type="Gene3D" id="2.60.40.420">
    <property type="entry name" value="Cupredoxins - blue copper proteins"/>
    <property type="match status" value="1"/>
</dbReference>
<dbReference type="InterPro" id="IPR008972">
    <property type="entry name" value="Cupredoxin"/>
</dbReference>
<dbReference type="InterPro" id="IPR031328">
    <property type="entry name" value="Ephrin"/>
</dbReference>
<dbReference type="InterPro" id="IPR034255">
    <property type="entry name" value="Ephrin-B_Ecto"/>
</dbReference>
<dbReference type="InterPro" id="IPR019765">
    <property type="entry name" value="Ephrin_CS"/>
</dbReference>
<dbReference type="InterPro" id="IPR001799">
    <property type="entry name" value="Ephrin_RBD"/>
</dbReference>
<dbReference type="PANTHER" id="PTHR11304">
    <property type="entry name" value="EPHRIN"/>
    <property type="match status" value="1"/>
</dbReference>
<dbReference type="PANTHER" id="PTHR11304:SF18">
    <property type="entry name" value="EPHRIN-B2"/>
    <property type="match status" value="1"/>
</dbReference>
<dbReference type="Pfam" id="PF00812">
    <property type="entry name" value="Ephrin"/>
    <property type="match status" value="1"/>
</dbReference>
<dbReference type="PRINTS" id="PR01347">
    <property type="entry name" value="EPHRIN"/>
</dbReference>
<dbReference type="SUPFAM" id="SSF49503">
    <property type="entry name" value="Cupredoxins"/>
    <property type="match status" value="1"/>
</dbReference>
<dbReference type="PROSITE" id="PS01299">
    <property type="entry name" value="EPHRIN_RBD_1"/>
    <property type="match status" value="1"/>
</dbReference>
<dbReference type="PROSITE" id="PS51551">
    <property type="entry name" value="EPHRIN_RBD_2"/>
    <property type="match status" value="1"/>
</dbReference>
<accession>P52800</accession>
<name>EFNB2_MOUSE</name>
<proteinExistence type="evidence at protein level"/>
<evidence type="ECO:0000250" key="1"/>
<evidence type="ECO:0000250" key="2">
    <source>
        <dbReference type="UniProtKB" id="P52799"/>
    </source>
</evidence>
<evidence type="ECO:0000255" key="3"/>
<evidence type="ECO:0000255" key="4">
    <source>
        <dbReference type="PROSITE-ProRule" id="PRU00884"/>
    </source>
</evidence>
<evidence type="ECO:0000256" key="5">
    <source>
        <dbReference type="SAM" id="MobiDB-lite"/>
    </source>
</evidence>
<evidence type="ECO:0000269" key="6">
    <source>
    </source>
</evidence>
<evidence type="ECO:0000269" key="7">
    <source>
    </source>
</evidence>
<evidence type="ECO:0000269" key="8">
    <source>
    </source>
</evidence>
<evidence type="ECO:0000269" key="9">
    <source>
    </source>
</evidence>
<evidence type="ECO:0000269" key="10">
    <source>
    </source>
</evidence>
<evidence type="ECO:0000269" key="11">
    <source>
    </source>
</evidence>
<evidence type="ECO:0000305" key="12"/>
<evidence type="ECO:0007744" key="13">
    <source>
        <dbReference type="PDB" id="1IKO"/>
    </source>
</evidence>
<evidence type="ECO:0007744" key="14">
    <source>
    </source>
</evidence>
<evidence type="ECO:0007744" key="15">
    <source>
    </source>
</evidence>
<evidence type="ECO:0007829" key="16">
    <source>
        <dbReference type="PDB" id="1IKO"/>
    </source>
</evidence>
<reference key="1">
    <citation type="journal article" date="1995" name="Mol. Immunol.">
        <title>Isolation of LERK-5: a ligand of the eph-related receptor tyrosine kinases.</title>
        <authorList>
            <person name="Cerretti D.P."/>
            <person name="Vanden Bos T."/>
            <person name="Nelson N."/>
            <person name="Kozlosky C.J."/>
            <person name="Reddy P."/>
            <person name="Maraskovsky E."/>
            <person name="Park L.S."/>
            <person name="Lyman S.D."/>
            <person name="Copeland N.G."/>
            <person name="Gilbert D.J."/>
            <person name="Jenkins N.A."/>
            <person name="Fletcher R.A."/>
        </authorList>
    </citation>
    <scope>NUCLEOTIDE SEQUENCE [MRNA]</scope>
</reference>
<reference key="2">
    <citation type="journal article" date="1995" name="Proc. Natl. Acad. Sci. U.S.A.">
        <title>Molecular cloning of a ligand for the EPH-related receptor protein-tyrosine kinase Htk.</title>
        <authorList>
            <person name="Bennett B.D."/>
            <person name="Zeigler F.C."/>
            <person name="Gu Q."/>
            <person name="Fendly B."/>
            <person name="Goddard A.D."/>
            <person name="Gillett N."/>
            <person name="Matthews W."/>
        </authorList>
    </citation>
    <scope>NUCLEOTIDE SEQUENCE [MRNA]</scope>
    <source>
        <strain>CB57BL/6J X SJL/J</strain>
    </source>
</reference>
<reference key="3">
    <citation type="journal article" date="1995" name="Mol. Cell. Biol.">
        <title>ELF-2, a new member of the Eph ligand family, is segmentally expressed in mouse embryos in the region of the hindbrain and newly forming somites.</title>
        <authorList>
            <person name="Bergemann A.D."/>
            <person name="Cheng H.J."/>
            <person name="Brambilla R."/>
            <person name="Klein R."/>
            <person name="Flanagan J.G."/>
        </authorList>
    </citation>
    <scope>NUCLEOTIDE SEQUENCE [MRNA]</scope>
    <scope>TISSUE SPECIFICITY</scope>
    <scope>DEVELOPMENTAL STAGE</scope>
    <source>
        <strain>ICR</strain>
        <tissue>Brain</tissue>
    </source>
</reference>
<reference key="4">
    <citation type="journal article" date="2004" name="Genome Res.">
        <title>The status, quality, and expansion of the NIH full-length cDNA project: the Mammalian Gene Collection (MGC).</title>
        <authorList>
            <consortium name="The MGC Project Team"/>
        </authorList>
    </citation>
    <scope>NUCLEOTIDE SEQUENCE [LARGE SCALE MRNA]</scope>
    <source>
        <strain>C57BL/6J</strain>
        <tissue>Brain</tissue>
    </source>
</reference>
<reference key="5">
    <citation type="journal article" date="2000" name="Development">
        <title>Complementary expression of transmembrane ephrins and their receptors in the mouse spinal cord: a possible role in constraining the orientation of longitudinally projecting axons.</title>
        <authorList>
            <person name="Imondi R."/>
            <person name="Wideman C."/>
            <person name="Kaprielian Z."/>
        </authorList>
    </citation>
    <scope>FUNCTION</scope>
    <scope>TISSUE SPECIFICITY</scope>
    <scope>DEVELOPMENTAL STAGE</scope>
</reference>
<reference key="6">
    <citation type="journal article" date="2010" name="Cell">
        <title>A tissue-specific atlas of mouse protein phosphorylation and expression.</title>
        <authorList>
            <person name="Huttlin E.L."/>
            <person name="Jedrychowski M.P."/>
            <person name="Elias J.E."/>
            <person name="Goswami T."/>
            <person name="Rad R."/>
            <person name="Beausoleil S.A."/>
            <person name="Villen J."/>
            <person name="Haas W."/>
            <person name="Sowa M.E."/>
            <person name="Gygi S.P."/>
        </authorList>
    </citation>
    <scope>PHOSPHORYLATION [LARGE SCALE ANALYSIS] AT SER-263 AND THR-277</scope>
    <scope>IDENTIFICATION BY MASS SPECTROMETRY [LARGE SCALE ANALYSIS]</scope>
    <source>
        <tissue>Brain</tissue>
        <tissue>Lung</tissue>
    </source>
</reference>
<reference key="7">
    <citation type="journal article" date="2014" name="Mol. Cell. Proteomics">
        <title>Immunoaffinity enrichment and mass spectrometry analysis of protein methylation.</title>
        <authorList>
            <person name="Guo A."/>
            <person name="Gu H."/>
            <person name="Zhou J."/>
            <person name="Mulhern D."/>
            <person name="Wang Y."/>
            <person name="Lee K.A."/>
            <person name="Yang V."/>
            <person name="Aguiar M."/>
            <person name="Kornhauser J."/>
            <person name="Jia X."/>
            <person name="Ren J."/>
            <person name="Beausoleil S.A."/>
            <person name="Silva J.C."/>
            <person name="Vemulapalli V."/>
            <person name="Bedford M.T."/>
            <person name="Comb M.J."/>
        </authorList>
    </citation>
    <scope>METHYLATION [LARGE SCALE ANALYSIS] AT ARG-280</scope>
    <scope>IDENTIFICATION BY MASS SPECTROMETRY [LARGE SCALE ANALYSIS]</scope>
    <source>
        <tissue>Brain</tissue>
    </source>
</reference>
<reference key="8">
    <citation type="journal article" date="2016" name="Front. Cell Dev. Biol.">
        <title>Gene expression profiling of muscle stem cells identifies novel regulators of postnatal myogenesis.</title>
        <authorList>
            <person name="Alonso-Martin S."/>
            <person name="Rochat A."/>
            <person name="Mademtzoglou D."/>
            <person name="Morais J."/>
            <person name="de Reynies A."/>
            <person name="Aurade F."/>
            <person name="Chang T.H."/>
            <person name="Zammit P.S."/>
            <person name="Relaix F."/>
        </authorList>
    </citation>
    <scope>DEVELOPMENTAL STAGE</scope>
    <scope>TISSUE SPECIFICITY</scope>
</reference>
<reference key="9">
    <citation type="journal article" date="2019" name="IScience">
        <title>EphA4-ADAM10 Interplay Patterns the Cochlear Sensory Epithelium through Local Disruption of Adherens Junctions.</title>
        <authorList>
            <person name="Defourny J."/>
            <person name="Peuckert C."/>
            <person name="Kullander K."/>
            <person name="Malgrange B."/>
        </authorList>
    </citation>
    <scope>SUBCELLULAR LOCATION</scope>
    <scope>TISSUE SPECIFICITY</scope>
</reference>
<reference key="10">
    <citation type="journal article" date="2001" name="Dev. Cell">
        <title>Crystal structure of an ephrin ectodomain.</title>
        <authorList>
            <person name="Toth J."/>
            <person name="Cutforth T."/>
            <person name="Gelinas A.D."/>
            <person name="Bethoney K.A."/>
            <person name="Bard J."/>
            <person name="Harrison C.J."/>
        </authorList>
    </citation>
    <scope>X-RAY CRYSTALLOGRAPHY (1.92 ANGSTROMS) OF 30-207</scope>
    <scope>DISULFIDE BONDS</scope>
    <scope>GLYCOSYLATION AT ASN-39</scope>
</reference>
<reference key="11">
    <citation type="journal article" date="2001" name="Nature">
        <title>Crystal structure of an Eph receptor-ephrin complex.</title>
        <authorList>
            <person name="Himanen J.-P."/>
            <person name="Rajashankar K.R."/>
            <person name="Lackmann M."/>
            <person name="Cowan C.A."/>
            <person name="Henkemeyer M."/>
            <person name="Nikolov D.B."/>
        </authorList>
    </citation>
    <scope>X-RAY CRYSTALLOGRAPHY (2.7 ANGSTROMS) OF 31-168 IN COMPLEX WITH EPHB2</scope>
    <scope>DISULFIDE BOND</scope>
</reference>